<proteinExistence type="evidence at protein level"/>
<protein>
    <recommendedName>
        <fullName>Mediator of RNA polymerase II transcription subunit 13</fullName>
    </recommendedName>
    <alternativeName>
        <fullName>Protein GRAND CENTRAL</fullName>
    </alternativeName>
    <alternativeName>
        <fullName>Protein MACCHI-BOU 2</fullName>
    </alternativeName>
</protein>
<dbReference type="EMBL" id="AC027034">
    <property type="protein sequence ID" value="AAG51574.1"/>
    <property type="status" value="ALT_SEQ"/>
    <property type="molecule type" value="Genomic_DNA"/>
</dbReference>
<dbReference type="EMBL" id="CP002684">
    <property type="protein sequence ID" value="AEE33227.1"/>
    <property type="molecule type" value="Genomic_DNA"/>
</dbReference>
<dbReference type="EMBL" id="CP002684">
    <property type="protein sequence ID" value="AEE33228.1"/>
    <property type="molecule type" value="Genomic_DNA"/>
</dbReference>
<dbReference type="PIR" id="D96595">
    <property type="entry name" value="D96595"/>
</dbReference>
<dbReference type="RefSeq" id="NP_001185237.1">
    <molecule id="F4I096-2"/>
    <property type="nucleotide sequence ID" value="NM_001198308.1"/>
</dbReference>
<dbReference type="RefSeq" id="NP_849809.2">
    <molecule id="F4I096-1"/>
    <property type="nucleotide sequence ID" value="NM_179478.2"/>
</dbReference>
<dbReference type="BioGRID" id="27203">
    <property type="interactions" value="1"/>
</dbReference>
<dbReference type="FunCoup" id="F4I096">
    <property type="interactions" value="2054"/>
</dbReference>
<dbReference type="STRING" id="3702.F4I096"/>
<dbReference type="GlyGen" id="F4I096">
    <property type="glycosylation" value="1 site"/>
</dbReference>
<dbReference type="iPTMnet" id="F4I096"/>
<dbReference type="PaxDb" id="3702-AT1G55325.2"/>
<dbReference type="EnsemblPlants" id="AT1G55325.1">
    <molecule id="F4I096-1"/>
    <property type="protein sequence ID" value="AT1G55325.1"/>
    <property type="gene ID" value="AT1G55325"/>
</dbReference>
<dbReference type="EnsemblPlants" id="AT1G55325.2">
    <molecule id="F4I096-2"/>
    <property type="protein sequence ID" value="AT1G55325.2"/>
    <property type="gene ID" value="AT1G55325"/>
</dbReference>
<dbReference type="GeneID" id="841978"/>
<dbReference type="Gramene" id="AT1G55325.1">
    <molecule id="F4I096-1"/>
    <property type="protein sequence ID" value="AT1G55325.1"/>
    <property type="gene ID" value="AT1G55325"/>
</dbReference>
<dbReference type="Gramene" id="AT1G55325.2">
    <molecule id="F4I096-2"/>
    <property type="protein sequence ID" value="AT1G55325.2"/>
    <property type="gene ID" value="AT1G55325"/>
</dbReference>
<dbReference type="KEGG" id="ath:AT1G55325"/>
<dbReference type="Araport" id="AT1G55325"/>
<dbReference type="TAIR" id="AT1G55325">
    <property type="gene designation" value="GCT"/>
</dbReference>
<dbReference type="eggNOG" id="KOG1175">
    <property type="taxonomic scope" value="Eukaryota"/>
</dbReference>
<dbReference type="InParanoid" id="F4I096"/>
<dbReference type="OMA" id="ADSMACH"/>
<dbReference type="PRO" id="PR:F4I096"/>
<dbReference type="Proteomes" id="UP000006548">
    <property type="component" value="Chromosome 1"/>
</dbReference>
<dbReference type="ExpressionAtlas" id="F4I096">
    <property type="expression patterns" value="baseline and differential"/>
</dbReference>
<dbReference type="GO" id="GO:0005634">
    <property type="term" value="C:nucleus"/>
    <property type="evidence" value="ECO:0007669"/>
    <property type="project" value="UniProtKB-SubCell"/>
</dbReference>
<dbReference type="GO" id="GO:0040034">
    <property type="term" value="P:regulation of development, heterochronic"/>
    <property type="evidence" value="ECO:0000315"/>
    <property type="project" value="TAIR"/>
</dbReference>
<dbReference type="GO" id="GO:0090213">
    <property type="term" value="P:regulation of radial pattern formation"/>
    <property type="evidence" value="ECO:0000315"/>
    <property type="project" value="TAIR"/>
</dbReference>
<dbReference type="InterPro" id="IPR051139">
    <property type="entry name" value="Mediator_complx_sub13"/>
</dbReference>
<dbReference type="InterPro" id="IPR021643">
    <property type="entry name" value="Mediator_Med13_N"/>
</dbReference>
<dbReference type="InterPro" id="IPR041285">
    <property type="entry name" value="MID_MedPIWI"/>
</dbReference>
<dbReference type="PANTHER" id="PTHR48249">
    <property type="entry name" value="MEDIATOR OF RNA POLYMERASE II TRANSCRIPTION SUBUNIT 13"/>
    <property type="match status" value="1"/>
</dbReference>
<dbReference type="PANTHER" id="PTHR48249:SF3">
    <property type="entry name" value="MEDIATOR OF RNA POLYMERASE II TRANSCRIPTION SUBUNIT 13"/>
    <property type="match status" value="1"/>
</dbReference>
<dbReference type="Pfam" id="PF11597">
    <property type="entry name" value="Med13_N"/>
    <property type="match status" value="1"/>
</dbReference>
<dbReference type="Pfam" id="PF18296">
    <property type="entry name" value="MID_MedPIWI"/>
    <property type="match status" value="1"/>
</dbReference>
<organism>
    <name type="scientific">Arabidopsis thaliana</name>
    <name type="common">Mouse-ear cress</name>
    <dbReference type="NCBI Taxonomy" id="3702"/>
    <lineage>
        <taxon>Eukaryota</taxon>
        <taxon>Viridiplantae</taxon>
        <taxon>Streptophyta</taxon>
        <taxon>Embryophyta</taxon>
        <taxon>Tracheophyta</taxon>
        <taxon>Spermatophyta</taxon>
        <taxon>Magnoliopsida</taxon>
        <taxon>eudicotyledons</taxon>
        <taxon>Gunneridae</taxon>
        <taxon>Pentapetalae</taxon>
        <taxon>rosids</taxon>
        <taxon>malvids</taxon>
        <taxon>Brassicales</taxon>
        <taxon>Brassicaceae</taxon>
        <taxon>Camelineae</taxon>
        <taxon>Arabidopsis</taxon>
    </lineage>
</organism>
<comment type="function">
    <text evidence="2 3 5">Component of the Mediator complex, a coactivator involved in the regulated transcription of nearly all RNA polymerase II-dependent genes. Mediator functions as a bridge to convey information from gene-specific regulatory proteins to the basal RNA polymerase II transcription machinery. The Mediator complex, having a compact conformation in its free form, is recruited to promoters by direct interactions with regulatory proteins and serves for the assembly of a functional preinitiation complex with RNA polymerase II and the general transcription factors. Acts closely together with MAB12. Involved in the regulation of embryo patterning and cotyledon organogenesis. May act through transient repression of specific genes such as the ones responsive to auxin.</text>
</comment>
<comment type="subunit">
    <text evidence="3 4">Component of the Mediator complex. Interacts with CYCC1-2 (CDK8 homolog).</text>
</comment>
<comment type="subcellular location">
    <subcellularLocation>
        <location evidence="6">Nucleus</location>
    </subcellularLocation>
</comment>
<comment type="alternative products">
    <event type="alternative splicing"/>
    <isoform>
        <id>F4I096-1</id>
        <name>1</name>
        <sequence type="displayed"/>
    </isoform>
    <isoform>
        <id>F4I096-2</id>
        <name>2</name>
        <sequence type="described" ref="VSP_043977 VSP_043978 VSP_043979 VSP_043980 VSP_043981 VSP_043982"/>
    </isoform>
    <text>A number of isoforms are produced. According to EST sequences.</text>
</comment>
<comment type="tissue specificity">
    <text evidence="2">Ubiquitous. Highest expression in the shoot apex.</text>
</comment>
<comment type="developmental stage">
    <text evidence="2">Expressed in both the apical and basal cell at the one-cell embryo stage and in all cells of the embryo and suspensor through the globular stage. Decreases in the periphery of the hypocotyl and on the abaxial side of cotyledons from the heart stage to the torpedo stage, and by the bent cotyledon stage, restricted to the vascular tissue and the shoot and root apical meristems.</text>
</comment>
<comment type="disruption phenotype">
    <text evidence="2 3 5">Abnormal embryo and cotyledon development, and embryo lethality in most cases. When viable, plants are small with greatly delayed flowering time and sterile flowers.</text>
</comment>
<comment type="similarity">
    <text evidence="6">Belongs to the Mediator complex subunit 13 family.</text>
</comment>
<comment type="sequence caution" evidence="6">
    <conflict type="erroneous gene model prediction">
        <sequence resource="EMBL-CDS" id="AAG51574"/>
    </conflict>
    <text>The predicted gene At1g55325 has been split into 2 genes: At1g55320 and At1g55325.</text>
</comment>
<gene>
    <name type="primary">MED13</name>
    <name type="synonym">GCT</name>
    <name type="synonym">MAB2</name>
    <name type="synonym">MED13_1</name>
    <name type="ordered locus">At1g55325</name>
    <name type="ORF">F7A10.14</name>
</gene>
<feature type="chain" id="PRO_0000415734" description="Mediator of RNA polymerase II transcription subunit 13">
    <location>
        <begin position="1"/>
        <end position="1921"/>
    </location>
</feature>
<feature type="region of interest" description="Disordered" evidence="1">
    <location>
        <begin position="400"/>
        <end position="434"/>
    </location>
</feature>
<feature type="region of interest" description="Disordered" evidence="1">
    <location>
        <begin position="702"/>
        <end position="724"/>
    </location>
</feature>
<feature type="region of interest" description="Disordered" evidence="1">
    <location>
        <begin position="1485"/>
        <end position="1528"/>
    </location>
</feature>
<feature type="compositionally biased region" description="Low complexity" evidence="1">
    <location>
        <begin position="407"/>
        <end position="427"/>
    </location>
</feature>
<feature type="compositionally biased region" description="Polar residues" evidence="1">
    <location>
        <begin position="1486"/>
        <end position="1496"/>
    </location>
</feature>
<feature type="compositionally biased region" description="Polar residues" evidence="1">
    <location>
        <begin position="1515"/>
        <end position="1527"/>
    </location>
</feature>
<feature type="cross-link" description="Glycyl lysine isopeptide (Lys-Gly) (interchain with G-Cter in ubiquitin)" evidence="7">
    <location>
        <position position="220"/>
    </location>
</feature>
<feature type="cross-link" description="Glycyl lysine isopeptide (Lys-Gly) (interchain with G-Cter in ubiquitin)" evidence="7">
    <location>
        <position position="226"/>
    </location>
</feature>
<feature type="splice variant" id="VSP_043977" description="In isoform 2." evidence="6">
    <location>
        <begin position="216"/>
        <end position="245"/>
    </location>
</feature>
<feature type="splice variant" id="VSP_043978" description="In isoform 2." evidence="6">
    <original>R</original>
    <variation>RFWLQNWIGPSLAGSSLFMHW</variation>
    <location>
        <position position="382"/>
    </location>
</feature>
<feature type="splice variant" id="VSP_043979" description="In isoform 2." evidence="6">
    <location>
        <begin position="1037"/>
        <end position="1056"/>
    </location>
</feature>
<feature type="splice variant" id="VSP_043980" description="In isoform 2." evidence="6">
    <original>GESTSLSFVKEVMLKHDRNW</original>
    <variation>VYETCR</variation>
    <location>
        <begin position="1152"/>
        <end position="1171"/>
    </location>
</feature>
<feature type="splice variant" id="VSP_043981" description="In isoform 2." evidence="6">
    <original>R</original>
    <variation>RGELLDTHIFPFGGISSRQDTKGLQCLFVQ</variation>
    <location>
        <position position="1559"/>
    </location>
</feature>
<feature type="splice variant" id="VSP_043982" description="In isoform 2." evidence="6">
    <original>V</original>
    <variation>LKVLTTDSGSQSLSMSLPRDHLDGICFQHTDCNFLRCCSPFLSGHIRRDGEQVNGQIKTAAIYYGVSLFPGKIDNLNAMVWSHSCCRPLSSMHHMA</variation>
    <location>
        <position position="1921"/>
    </location>
</feature>
<feature type="mutagenesis site" description="In gct-3; uncoupled cell division, pattern formation and morphogenesis during embryogenesis." evidence="2">
    <original>S</original>
    <variation>N</variation>
    <location>
        <position position="407"/>
    </location>
</feature>
<sequence>MWTNVFRIGGLHNVSWFQFLPSETELNPGFDRSSRAEQNEVATYLVLSSHLRLQKEGFLTTWTNSFVGPWDPSQGLYNPDEKIKLWLFLPGRHSSISDKAQAAVSKLRVVASGIWVAPGDSEEISVAFSQSLRNCIERALSGISYMRFGDVFSKFSPQSEEYLRRGQPTVEFIFAATEEAVFVHVIISAKNVRTLSSGDAERMLRSSLKNSSYRLPAFRKCLGLAKSEDNRLCYINTSHRPMLFPPVIVSPHGMRGSLTGFCPNDLVKQVYFSSGNLKTSTGYVGLPSHIGRGSRLINGNHCYVEVTLGCCQNRNDNTSQANSTFAVNLPHNQCPEPSVGSKDHRKGQSDLSSVCEKKFIYPAEAVLVPILQSAFAKFSLKRAGDFDCLGASENKSDGFYEKNGYNSSGSSRNSSISSTSSASSGSGWRMTSRTGDLDADADSLTCRQSGLTCNDDRLKMGSKRPRTGMAESFGQVGIENDQIGWDWDADDDDDDREVGMDIKALLSEFGDFGDFFENDALPFGEPPGTAESHVLVFPPDSADVGSSPVDMMDVSDQIVLPVGFSSFESFNPVPPIIDECLIKSQEVLHSSITSVPSNQMSISSTGEFDHLLKAEAMMTFAPEYGAVEAPMSEISSTFFKSPYLPKSHKVESSNSRTSNYVYGATPPTTDSDGAGDMILFGSKSCIGNNAGRTLYHSREHYTQVEGRKGRHDKLPTVISDNSSTKEGVSQSIHSKHSAANAVKVVQGKKTDGISAVVSTLLSSKTLLATDVGSVMFQAFMCRMRHIITSSKHSSPVSLTRLSGNFFLNQLSNEPSTLTDNISARNEIYKKDIPTRIAGDFDGGMLDSHMSAPVGVWRTVSVPKTAKPASSPNIEAGSSLPHSSFSEDSLLSYGQRQPLQDLLDGIALLVQQATSFVDLALDSDCGDGPYGWLALEELWRRELSCGPSAGHAGCGGTLASCHSLDIAGVKLVDPLSAEVFPSSVITLLQSDIKTALKSAFGQSDGPLSVTDWCKGRNQSGDGGSISEGFTAESALSEVNGVNISDDFIIDKYFGKQAVSNAIDGGKGDETAQSQDIYSSELLRPTLFVLPSPAILVGYQDDWLKISTNSLTHWEKAPFEPYALPKSINYAVVCPDIDPLTCAATDFFQQLGTGESTSLSFVKEVMLKHDRNWLGTHLPQSLGNQMEKDVGRLSSSGFVLLDCPQSMKIESNNTSLLGSLSDYFLSLSNGWNVNSYLKSLSKALKGLKLGSGLYTNQKEGSGSPCVVVYIVCPFPDPSAVLRTIVESSIALGSVIQSDRDRRSILNSQVARAFSSSTAVDEASISHIPVLSGFSVPKLVLQVVSVDSIFRITSPSFNELVILKDTAFSVYNKARRISRGMPNDAFFSSSLPSRSSSALTPMNSISGIWKDCGGSRMTGSTHPRDGEIDVSLRTSGWDTSTSWQIPRSGGLSCDPNRNGDFYLNDEIFYLFEPLFILSEPGSVERGVSPTFTSLGSESSKPIPEDGGRGSGPGMNSMEGITSGSSSQGDVSQLEGKAIPSLHCCYGWTEDWRWLVSIWTDARVLQQGCQILQACSSPDNGSFKPRDFVITRIGNFFELEYQEWQKAIYSAGGPEIKKWPIQLRRSAPSGIATNSNGSSLQQQDLSLIQERASSTSTLYSSHSKQSTFVKGSMGQSAGRKQIMGGQTISGTPRGLFQWVHSISFASISLDHSLHFVLPAELVSAGGGQSSTGMSSVNYIEGFTPVKSLGSTAFSYMMIPSPNMRFLHPSPLQLPTCLTAESPPLAHLLHSKGYAIPLSTGFVVSKAVPSMRKDSRINVKEEWPSVLSVSLIDYYGGYDNAHDKILQGIVKQGGGTKETRDFEVESHLILESIAAELHALSWMTVSPAYLDRRTALPFHCDMVLRLRRLLHFADKEVSRIPDKTGV</sequence>
<accession>F4I096</accession>
<accession>F4I095</accession>
<accession>Q9C8A3</accession>
<name>MED13_ARATH</name>
<reference key="1">
    <citation type="journal article" date="2000" name="Nature">
        <title>Sequence and analysis of chromosome 1 of the plant Arabidopsis thaliana.</title>
        <authorList>
            <person name="Theologis A."/>
            <person name="Ecker J.R."/>
            <person name="Palm C.J."/>
            <person name="Federspiel N.A."/>
            <person name="Kaul S."/>
            <person name="White O."/>
            <person name="Alonso J."/>
            <person name="Altafi H."/>
            <person name="Araujo R."/>
            <person name="Bowman C.L."/>
            <person name="Brooks S.Y."/>
            <person name="Buehler E."/>
            <person name="Chan A."/>
            <person name="Chao Q."/>
            <person name="Chen H."/>
            <person name="Cheuk R.F."/>
            <person name="Chin C.W."/>
            <person name="Chung M.K."/>
            <person name="Conn L."/>
            <person name="Conway A.B."/>
            <person name="Conway A.R."/>
            <person name="Creasy T.H."/>
            <person name="Dewar K."/>
            <person name="Dunn P."/>
            <person name="Etgu P."/>
            <person name="Feldblyum T.V."/>
            <person name="Feng J.-D."/>
            <person name="Fong B."/>
            <person name="Fujii C.Y."/>
            <person name="Gill J.E."/>
            <person name="Goldsmith A.D."/>
            <person name="Haas B."/>
            <person name="Hansen N.F."/>
            <person name="Hughes B."/>
            <person name="Huizar L."/>
            <person name="Hunter J.L."/>
            <person name="Jenkins J."/>
            <person name="Johnson-Hopson C."/>
            <person name="Khan S."/>
            <person name="Khaykin E."/>
            <person name="Kim C.J."/>
            <person name="Koo H.L."/>
            <person name="Kremenetskaia I."/>
            <person name="Kurtz D.B."/>
            <person name="Kwan A."/>
            <person name="Lam B."/>
            <person name="Langin-Hooper S."/>
            <person name="Lee A."/>
            <person name="Lee J.M."/>
            <person name="Lenz C.A."/>
            <person name="Li J.H."/>
            <person name="Li Y.-P."/>
            <person name="Lin X."/>
            <person name="Liu S.X."/>
            <person name="Liu Z.A."/>
            <person name="Luros J.S."/>
            <person name="Maiti R."/>
            <person name="Marziali A."/>
            <person name="Militscher J."/>
            <person name="Miranda M."/>
            <person name="Nguyen M."/>
            <person name="Nierman W.C."/>
            <person name="Osborne B.I."/>
            <person name="Pai G."/>
            <person name="Peterson J."/>
            <person name="Pham P.K."/>
            <person name="Rizzo M."/>
            <person name="Rooney T."/>
            <person name="Rowley D."/>
            <person name="Sakano H."/>
            <person name="Salzberg S.L."/>
            <person name="Schwartz J.R."/>
            <person name="Shinn P."/>
            <person name="Southwick A.M."/>
            <person name="Sun H."/>
            <person name="Tallon L.J."/>
            <person name="Tambunga G."/>
            <person name="Toriumi M.J."/>
            <person name="Town C.D."/>
            <person name="Utterback T."/>
            <person name="Van Aken S."/>
            <person name="Vaysberg M."/>
            <person name="Vysotskaia V.S."/>
            <person name="Walker M."/>
            <person name="Wu D."/>
            <person name="Yu G."/>
            <person name="Fraser C.M."/>
            <person name="Venter J.C."/>
            <person name="Davis R.W."/>
        </authorList>
    </citation>
    <scope>NUCLEOTIDE SEQUENCE [LARGE SCALE GENOMIC DNA]</scope>
    <source>
        <strain>cv. Columbia</strain>
    </source>
</reference>
<reference key="2">
    <citation type="journal article" date="2017" name="Plant J.">
        <title>Araport11: a complete reannotation of the Arabidopsis thaliana reference genome.</title>
        <authorList>
            <person name="Cheng C.Y."/>
            <person name="Krishnakumar V."/>
            <person name="Chan A.P."/>
            <person name="Thibaud-Nissen F."/>
            <person name="Schobel S."/>
            <person name="Town C.D."/>
        </authorList>
    </citation>
    <scope>GENOME REANNOTATION</scope>
    <source>
        <strain>cv. Columbia</strain>
    </source>
</reference>
<reference key="3">
    <citation type="journal article" date="2007" name="Mol. Cell. Proteomics">
        <title>Multidimensional protein identification technology (MudPIT) analysis of ubiquitinated proteins in plants.</title>
        <authorList>
            <person name="Maor R."/>
            <person name="Jones A."/>
            <person name="Nuehse T.S."/>
            <person name="Studholme D.J."/>
            <person name="Peck S.C."/>
            <person name="Shirasu K."/>
        </authorList>
    </citation>
    <scope>UBIQUITINATION [LARGE SCALE ANALYSIS] AT LYS-220 AND LYS-226</scope>
    <scope>IDENTIFICATION BY MASS SPECTROMETRY [LARGE SCALE ANALYSIS]</scope>
    <source>
        <strain>cv. Landsberg erecta</strain>
    </source>
</reference>
<reference key="4">
    <citation type="journal article" date="2010" name="Development">
        <title>The MED12-MED13 module of Mediator regulates the timing of embryo patterning in Arabidopsis.</title>
        <authorList>
            <person name="Gillmor C.S."/>
            <person name="Park M.Y."/>
            <person name="Smith M.R."/>
            <person name="Pepitone R."/>
            <person name="Kerstetter R.A."/>
            <person name="Poethig R.S."/>
        </authorList>
    </citation>
    <scope>FUNCTION</scope>
    <scope>MUTAGENESIS OF SER-407</scope>
    <scope>DEVELOPMENTAL STAGE</scope>
    <scope>TISSUE SPECIFICITY</scope>
    <scope>DISRUPTION PHENOTYPE</scope>
</reference>
<reference key="5">
    <citation type="journal article" date="2011" name="Plant Cell Physiol.">
        <title>MACCHI-BOU 2 is required for early embryo patterning and cotyledon organogenesis in Arabidopsis.</title>
        <authorList>
            <person name="Ito J."/>
            <person name="Sono T."/>
            <person name="Tasaka M."/>
            <person name="Furutani M."/>
        </authorList>
    </citation>
    <scope>FUNCTION</scope>
    <scope>SUBUNIT</scope>
    <scope>DISRUPTION PHENOTYPE</scope>
</reference>
<reference key="6">
    <citation type="journal article" date="2011" name="Plant Physiol.">
        <title>The Mediator complex in plants: structure, phylogeny, and expression profiling of representative genes in a dicot (Arabidopsis) and a monocot (rice) during reproduction and abiotic stress.</title>
        <authorList>
            <person name="Mathur S."/>
            <person name="Vyas S."/>
            <person name="Kapoor S."/>
            <person name="Tyagi A.K."/>
        </authorList>
    </citation>
    <scope>IDENTIFICATION</scope>
    <scope>SUBUNIT</scope>
    <scope>NOMENCLATURE</scope>
</reference>
<reference key="7">
    <citation type="journal article" date="2012" name="Plant Cell Physiol.">
        <title>CRYPTIC PRECOCIOUS/MED12 is a novel flowering regulator with multiple target steps in Arabidopsis.</title>
        <authorList>
            <person name="Imura Y."/>
            <person name="Kobayashi Y."/>
            <person name="Yamamoto S."/>
            <person name="Furutani M."/>
            <person name="Tasaka M."/>
            <person name="Abe M."/>
            <person name="Araki T."/>
        </authorList>
    </citation>
    <scope>FUNCTION</scope>
    <scope>DISRUPTION PHENOTYPE</scope>
</reference>
<evidence type="ECO:0000256" key="1">
    <source>
        <dbReference type="SAM" id="MobiDB-lite"/>
    </source>
</evidence>
<evidence type="ECO:0000269" key="2">
    <source>
    </source>
</evidence>
<evidence type="ECO:0000269" key="3">
    <source>
    </source>
</evidence>
<evidence type="ECO:0000269" key="4">
    <source>
    </source>
</evidence>
<evidence type="ECO:0000269" key="5">
    <source>
    </source>
</evidence>
<evidence type="ECO:0000305" key="6"/>
<evidence type="ECO:0007744" key="7">
    <source>
    </source>
</evidence>
<keyword id="KW-0025">Alternative splicing</keyword>
<keyword id="KW-0217">Developmental protein</keyword>
<keyword id="KW-0341">Growth regulation</keyword>
<keyword id="KW-1017">Isopeptide bond</keyword>
<keyword id="KW-0539">Nucleus</keyword>
<keyword id="KW-1185">Reference proteome</keyword>
<keyword id="KW-0678">Repressor</keyword>
<keyword id="KW-0804">Transcription</keyword>
<keyword id="KW-0805">Transcription regulation</keyword>
<keyword id="KW-0832">Ubl conjugation</keyword>